<sequence length="352" mass="39329">MITLNTEKSFVELKHITKRFGNNTVIDDLNLAIPQGKMVTLLGPSGCGKTTVLRAVAGLEKPTEGQIFIDGEDVTERSIQQRDICMVFQSYALFPHMSLGENIGYGLKMLGRPKAEINQRVKEALALVDLEGFEDRYVDQISGGQQQRVALARALILKPKVLLFDEPLSNLDANLRRSMREKIRELQQQFNITSLYVTHDQSEAFAVSDMVLVMNKGKIMQLGAPQELYRQPASRFMASFMGDANIFPATFTADSVNIYGYLIPRPQGFAAGLSESTVGIRPEAITLSHQGEESQRCTITQVAYMGPQYEVQVDWHGQSMLLQVNATQLQPNPGDSYYLQIHPYGMFVLSEQ</sequence>
<protein>
    <recommendedName>
        <fullName evidence="1">Fe(3+) ions import ATP-binding protein FbpC 1</fullName>
        <ecNumber evidence="1">7.2.2.7</ecNumber>
    </recommendedName>
</protein>
<reference key="1">
    <citation type="journal article" date="2004" name="Proc. Natl. Acad. Sci. U.S.A.">
        <title>Genome sequence of the enterobacterial phytopathogen Erwinia carotovora subsp. atroseptica and characterization of virulence factors.</title>
        <authorList>
            <person name="Bell K.S."/>
            <person name="Sebaihia M."/>
            <person name="Pritchard L."/>
            <person name="Holden M.T.G."/>
            <person name="Hyman L.J."/>
            <person name="Holeva M.C."/>
            <person name="Thomson N.R."/>
            <person name="Bentley S.D."/>
            <person name="Churcher L.J.C."/>
            <person name="Mungall K."/>
            <person name="Atkin R."/>
            <person name="Bason N."/>
            <person name="Brooks K."/>
            <person name="Chillingworth T."/>
            <person name="Clark K."/>
            <person name="Doggett J."/>
            <person name="Fraser A."/>
            <person name="Hance Z."/>
            <person name="Hauser H."/>
            <person name="Jagels K."/>
            <person name="Moule S."/>
            <person name="Norbertczak H."/>
            <person name="Ormond D."/>
            <person name="Price C."/>
            <person name="Quail M.A."/>
            <person name="Sanders M."/>
            <person name="Walker D."/>
            <person name="Whitehead S."/>
            <person name="Salmond G.P.C."/>
            <person name="Birch P.R.J."/>
            <person name="Parkhill J."/>
            <person name="Toth I.K."/>
        </authorList>
    </citation>
    <scope>NUCLEOTIDE SEQUENCE [LARGE SCALE GENOMIC DNA]</scope>
    <source>
        <strain>SCRI 1043 / ATCC BAA-672</strain>
    </source>
</reference>
<keyword id="KW-0067">ATP-binding</keyword>
<keyword id="KW-0997">Cell inner membrane</keyword>
<keyword id="KW-1003">Cell membrane</keyword>
<keyword id="KW-0406">Ion transport</keyword>
<keyword id="KW-0408">Iron</keyword>
<keyword id="KW-0410">Iron transport</keyword>
<keyword id="KW-0472">Membrane</keyword>
<keyword id="KW-0547">Nucleotide-binding</keyword>
<keyword id="KW-1185">Reference proteome</keyword>
<keyword id="KW-1278">Translocase</keyword>
<keyword id="KW-0813">Transport</keyword>
<name>FBPC1_PECAS</name>
<comment type="function">
    <text evidence="1">Part of the ABC transporter complex FbpABC involved in Fe(3+) ions import. Responsible for energy coupling to the transport system.</text>
</comment>
<comment type="catalytic activity">
    <reaction evidence="1">
        <text>Fe(3+)(out) + ATP + H2O = Fe(3+)(in) + ADP + phosphate + H(+)</text>
        <dbReference type="Rhea" id="RHEA:12332"/>
        <dbReference type="ChEBI" id="CHEBI:15377"/>
        <dbReference type="ChEBI" id="CHEBI:15378"/>
        <dbReference type="ChEBI" id="CHEBI:29034"/>
        <dbReference type="ChEBI" id="CHEBI:30616"/>
        <dbReference type="ChEBI" id="CHEBI:43474"/>
        <dbReference type="ChEBI" id="CHEBI:456216"/>
        <dbReference type="EC" id="7.2.2.7"/>
    </reaction>
</comment>
<comment type="subunit">
    <text evidence="1">The complex is composed of two ATP-binding proteins (FbpC), two transmembrane proteins (FbpB) and a solute-binding protein (FbpA).</text>
</comment>
<comment type="subcellular location">
    <subcellularLocation>
        <location evidence="1">Cell inner membrane</location>
        <topology evidence="1">Peripheral membrane protein</topology>
    </subcellularLocation>
</comment>
<comment type="similarity">
    <text evidence="1">Belongs to the ABC transporter superfamily. Fe(3+) ion importer (TC 3.A.1.10) family.</text>
</comment>
<organism>
    <name type="scientific">Pectobacterium atrosepticum (strain SCRI 1043 / ATCC BAA-672)</name>
    <name type="common">Erwinia carotovora subsp. atroseptica</name>
    <dbReference type="NCBI Taxonomy" id="218491"/>
    <lineage>
        <taxon>Bacteria</taxon>
        <taxon>Pseudomonadati</taxon>
        <taxon>Pseudomonadota</taxon>
        <taxon>Gammaproteobacteria</taxon>
        <taxon>Enterobacterales</taxon>
        <taxon>Pectobacteriaceae</taxon>
        <taxon>Pectobacterium</taxon>
    </lineage>
</organism>
<accession>Q6D734</accession>
<gene>
    <name evidence="1" type="primary">fbpC1</name>
    <name type="synonym">afuC1</name>
    <name type="ordered locus">ECA1492</name>
</gene>
<evidence type="ECO:0000255" key="1">
    <source>
        <dbReference type="HAMAP-Rule" id="MF_01706"/>
    </source>
</evidence>
<feature type="chain" id="PRO_0000092349" description="Fe(3+) ions import ATP-binding protein FbpC 1">
    <location>
        <begin position="1"/>
        <end position="352"/>
    </location>
</feature>
<feature type="domain" description="ABC transporter" evidence="1">
    <location>
        <begin position="11"/>
        <end position="241"/>
    </location>
</feature>
<feature type="binding site" evidence="1">
    <location>
        <begin position="43"/>
        <end position="50"/>
    </location>
    <ligand>
        <name>ATP</name>
        <dbReference type="ChEBI" id="CHEBI:30616"/>
    </ligand>
</feature>
<dbReference type="EC" id="7.2.2.7" evidence="1"/>
<dbReference type="EMBL" id="BX950851">
    <property type="protein sequence ID" value="CAG74401.1"/>
    <property type="molecule type" value="Genomic_DNA"/>
</dbReference>
<dbReference type="SMR" id="Q6D734"/>
<dbReference type="STRING" id="218491.ECA1492"/>
<dbReference type="KEGG" id="eca:ECA1492"/>
<dbReference type="eggNOG" id="COG3842">
    <property type="taxonomic scope" value="Bacteria"/>
</dbReference>
<dbReference type="HOGENOM" id="CLU_000604_1_1_6"/>
<dbReference type="Proteomes" id="UP000007966">
    <property type="component" value="Chromosome"/>
</dbReference>
<dbReference type="GO" id="GO:0055052">
    <property type="term" value="C:ATP-binding cassette (ABC) transporter complex, substrate-binding subunit-containing"/>
    <property type="evidence" value="ECO:0007669"/>
    <property type="project" value="TreeGrafter"/>
</dbReference>
<dbReference type="GO" id="GO:0015408">
    <property type="term" value="F:ABC-type ferric iron transporter activity"/>
    <property type="evidence" value="ECO:0007669"/>
    <property type="project" value="UniProtKB-EC"/>
</dbReference>
<dbReference type="GO" id="GO:0005524">
    <property type="term" value="F:ATP binding"/>
    <property type="evidence" value="ECO:0007669"/>
    <property type="project" value="UniProtKB-KW"/>
</dbReference>
<dbReference type="GO" id="GO:0016887">
    <property type="term" value="F:ATP hydrolysis activity"/>
    <property type="evidence" value="ECO:0007669"/>
    <property type="project" value="InterPro"/>
</dbReference>
<dbReference type="FunFam" id="3.40.50.300:FF:002767">
    <property type="entry name" value="Fe(3+) ions import ATP-binding protein FbpC"/>
    <property type="match status" value="1"/>
</dbReference>
<dbReference type="Gene3D" id="2.40.50.100">
    <property type="match status" value="1"/>
</dbReference>
<dbReference type="Gene3D" id="3.40.50.300">
    <property type="entry name" value="P-loop containing nucleotide triphosphate hydrolases"/>
    <property type="match status" value="1"/>
</dbReference>
<dbReference type="InterPro" id="IPR003593">
    <property type="entry name" value="AAA+_ATPase"/>
</dbReference>
<dbReference type="InterPro" id="IPR003439">
    <property type="entry name" value="ABC_transporter-like_ATP-bd"/>
</dbReference>
<dbReference type="InterPro" id="IPR017871">
    <property type="entry name" value="ABC_transporter-like_CS"/>
</dbReference>
<dbReference type="InterPro" id="IPR047641">
    <property type="entry name" value="ABC_transpr_MalK/UgpC-like"/>
</dbReference>
<dbReference type="InterPro" id="IPR008995">
    <property type="entry name" value="Mo/tungstate-bd_C_term_dom"/>
</dbReference>
<dbReference type="InterPro" id="IPR027417">
    <property type="entry name" value="P-loop_NTPase"/>
</dbReference>
<dbReference type="InterPro" id="IPR013611">
    <property type="entry name" value="Transp-assoc_OB_typ2"/>
</dbReference>
<dbReference type="NCBIfam" id="NF008513">
    <property type="entry name" value="PRK11432.1"/>
    <property type="match status" value="1"/>
</dbReference>
<dbReference type="PANTHER" id="PTHR43875">
    <property type="entry name" value="MALTODEXTRIN IMPORT ATP-BINDING PROTEIN MSMX"/>
    <property type="match status" value="1"/>
</dbReference>
<dbReference type="PANTHER" id="PTHR43875:SF15">
    <property type="entry name" value="TREHALOSE IMPORT ATP-BINDING PROTEIN SUGC"/>
    <property type="match status" value="1"/>
</dbReference>
<dbReference type="Pfam" id="PF00005">
    <property type="entry name" value="ABC_tran"/>
    <property type="match status" value="1"/>
</dbReference>
<dbReference type="Pfam" id="PF08402">
    <property type="entry name" value="TOBE_2"/>
    <property type="match status" value="1"/>
</dbReference>
<dbReference type="SMART" id="SM00382">
    <property type="entry name" value="AAA"/>
    <property type="match status" value="1"/>
</dbReference>
<dbReference type="SUPFAM" id="SSF50331">
    <property type="entry name" value="MOP-like"/>
    <property type="match status" value="1"/>
</dbReference>
<dbReference type="SUPFAM" id="SSF52540">
    <property type="entry name" value="P-loop containing nucleoside triphosphate hydrolases"/>
    <property type="match status" value="1"/>
</dbReference>
<dbReference type="PROSITE" id="PS00211">
    <property type="entry name" value="ABC_TRANSPORTER_1"/>
    <property type="match status" value="1"/>
</dbReference>
<dbReference type="PROSITE" id="PS50893">
    <property type="entry name" value="ABC_TRANSPORTER_2"/>
    <property type="match status" value="1"/>
</dbReference>
<dbReference type="PROSITE" id="PS51242">
    <property type="entry name" value="FBPC"/>
    <property type="match status" value="1"/>
</dbReference>
<proteinExistence type="inferred from homology"/>